<name>VP37D_MOUSE</name>
<comment type="function">
    <text evidence="1">Component of the ESCRT-I complex, a regulator of vesicular trafficking process. Required for the sorting of endocytic ubiquitinated cargos into multivesicular bodies. May be involved in cell growth and differentiation (By similarity).</text>
</comment>
<comment type="subunit">
    <text evidence="1">Component of the ESCRT-I complex (endosomal sorting complex required for transport I) which consists of TSG101, VPS28, a VPS37 protein (VPS37A to -D) and MVB12A or MVB12B in a 1:1:1:1 stoichiometry. Interacts with TSG101 and MVB12A. Component of the ESCRT-I complex (endosomal sorting complex required for transport I) which consists of TSG101, VPS28, a VPS37 protein (VPS37A to -D) and UBAP1 in a 1:1:1:1 stoichiometry (By similarity).</text>
</comment>
<comment type="subcellular location">
    <subcellularLocation>
        <location evidence="1">Late endosome membrane</location>
        <topology evidence="1">Peripheral membrane protein</topology>
    </subcellularLocation>
</comment>
<comment type="alternative products">
    <event type="alternative splicing"/>
    <isoform>
        <id>Q810I0-1</id>
        <name evidence="6">1</name>
        <sequence type="displayed"/>
    </isoform>
    <isoform>
        <id>Q810I0-2</id>
        <name evidence="5 6">2</name>
        <sequence type="described" ref="VSP_052739"/>
    </isoform>
</comment>
<comment type="similarity">
    <text evidence="2">Belongs to the VPS37 family.</text>
</comment>
<comment type="sequence caution" evidence="9">
    <conflict type="erroneous initiation">
        <sequence resource="EMBL-CDS" id="AAH44789"/>
    </conflict>
</comment>
<reference evidence="9 11" key="1">
    <citation type="submission" date="2003-07" db="EMBL/GenBank/DDBJ databases">
        <title>Novel genes in the Williams-Beuren Syndrome critical region.</title>
        <authorList>
            <person name="Ucla C."/>
            <person name="Merla G."/>
            <person name="Reymond A."/>
        </authorList>
    </citation>
    <scope>NUCLEOTIDE SEQUENCE [MRNA] (ISOFORMS 1 AND 2)</scope>
</reference>
<reference evidence="9 12" key="2">
    <citation type="journal article" date="2005" name="Science">
        <title>The transcriptional landscape of the mammalian genome.</title>
        <authorList>
            <person name="Carninci P."/>
            <person name="Kasukawa T."/>
            <person name="Katayama S."/>
            <person name="Gough J."/>
            <person name="Frith M.C."/>
            <person name="Maeda N."/>
            <person name="Oyama R."/>
            <person name="Ravasi T."/>
            <person name="Lenhard B."/>
            <person name="Wells C."/>
            <person name="Kodzius R."/>
            <person name="Shimokawa K."/>
            <person name="Bajic V.B."/>
            <person name="Brenner S.E."/>
            <person name="Batalov S."/>
            <person name="Forrest A.R."/>
            <person name="Zavolan M."/>
            <person name="Davis M.J."/>
            <person name="Wilming L.G."/>
            <person name="Aidinis V."/>
            <person name="Allen J.E."/>
            <person name="Ambesi-Impiombato A."/>
            <person name="Apweiler R."/>
            <person name="Aturaliya R.N."/>
            <person name="Bailey T.L."/>
            <person name="Bansal M."/>
            <person name="Baxter L."/>
            <person name="Beisel K.W."/>
            <person name="Bersano T."/>
            <person name="Bono H."/>
            <person name="Chalk A.M."/>
            <person name="Chiu K.P."/>
            <person name="Choudhary V."/>
            <person name="Christoffels A."/>
            <person name="Clutterbuck D.R."/>
            <person name="Crowe M.L."/>
            <person name="Dalla E."/>
            <person name="Dalrymple B.P."/>
            <person name="de Bono B."/>
            <person name="Della Gatta G."/>
            <person name="di Bernardo D."/>
            <person name="Down T."/>
            <person name="Engstrom P."/>
            <person name="Fagiolini M."/>
            <person name="Faulkner G."/>
            <person name="Fletcher C.F."/>
            <person name="Fukushima T."/>
            <person name="Furuno M."/>
            <person name="Futaki S."/>
            <person name="Gariboldi M."/>
            <person name="Georgii-Hemming P."/>
            <person name="Gingeras T.R."/>
            <person name="Gojobori T."/>
            <person name="Green R.E."/>
            <person name="Gustincich S."/>
            <person name="Harbers M."/>
            <person name="Hayashi Y."/>
            <person name="Hensch T.K."/>
            <person name="Hirokawa N."/>
            <person name="Hill D."/>
            <person name="Huminiecki L."/>
            <person name="Iacono M."/>
            <person name="Ikeo K."/>
            <person name="Iwama A."/>
            <person name="Ishikawa T."/>
            <person name="Jakt M."/>
            <person name="Kanapin A."/>
            <person name="Katoh M."/>
            <person name="Kawasawa Y."/>
            <person name="Kelso J."/>
            <person name="Kitamura H."/>
            <person name="Kitano H."/>
            <person name="Kollias G."/>
            <person name="Krishnan S.P."/>
            <person name="Kruger A."/>
            <person name="Kummerfeld S.K."/>
            <person name="Kurochkin I.V."/>
            <person name="Lareau L.F."/>
            <person name="Lazarevic D."/>
            <person name="Lipovich L."/>
            <person name="Liu J."/>
            <person name="Liuni S."/>
            <person name="McWilliam S."/>
            <person name="Madan Babu M."/>
            <person name="Madera M."/>
            <person name="Marchionni L."/>
            <person name="Matsuda H."/>
            <person name="Matsuzawa S."/>
            <person name="Miki H."/>
            <person name="Mignone F."/>
            <person name="Miyake S."/>
            <person name="Morris K."/>
            <person name="Mottagui-Tabar S."/>
            <person name="Mulder N."/>
            <person name="Nakano N."/>
            <person name="Nakauchi H."/>
            <person name="Ng P."/>
            <person name="Nilsson R."/>
            <person name="Nishiguchi S."/>
            <person name="Nishikawa S."/>
            <person name="Nori F."/>
            <person name="Ohara O."/>
            <person name="Okazaki Y."/>
            <person name="Orlando V."/>
            <person name="Pang K.C."/>
            <person name="Pavan W.J."/>
            <person name="Pavesi G."/>
            <person name="Pesole G."/>
            <person name="Petrovsky N."/>
            <person name="Piazza S."/>
            <person name="Reed J."/>
            <person name="Reid J.F."/>
            <person name="Ring B.Z."/>
            <person name="Ringwald M."/>
            <person name="Rost B."/>
            <person name="Ruan Y."/>
            <person name="Salzberg S.L."/>
            <person name="Sandelin A."/>
            <person name="Schneider C."/>
            <person name="Schoenbach C."/>
            <person name="Sekiguchi K."/>
            <person name="Semple C.A."/>
            <person name="Seno S."/>
            <person name="Sessa L."/>
            <person name="Sheng Y."/>
            <person name="Shibata Y."/>
            <person name="Shimada H."/>
            <person name="Shimada K."/>
            <person name="Silva D."/>
            <person name="Sinclair B."/>
            <person name="Sperling S."/>
            <person name="Stupka E."/>
            <person name="Sugiura K."/>
            <person name="Sultana R."/>
            <person name="Takenaka Y."/>
            <person name="Taki K."/>
            <person name="Tammoja K."/>
            <person name="Tan S.L."/>
            <person name="Tang S."/>
            <person name="Taylor M.S."/>
            <person name="Tegner J."/>
            <person name="Teichmann S.A."/>
            <person name="Ueda H.R."/>
            <person name="van Nimwegen E."/>
            <person name="Verardo R."/>
            <person name="Wei C.L."/>
            <person name="Yagi K."/>
            <person name="Yamanishi H."/>
            <person name="Zabarovsky E."/>
            <person name="Zhu S."/>
            <person name="Zimmer A."/>
            <person name="Hide W."/>
            <person name="Bult C."/>
            <person name="Grimmond S.M."/>
            <person name="Teasdale R.D."/>
            <person name="Liu E.T."/>
            <person name="Brusic V."/>
            <person name="Quackenbush J."/>
            <person name="Wahlestedt C."/>
            <person name="Mattick J.S."/>
            <person name="Hume D.A."/>
            <person name="Kai C."/>
            <person name="Sasaki D."/>
            <person name="Tomaru Y."/>
            <person name="Fukuda S."/>
            <person name="Kanamori-Katayama M."/>
            <person name="Suzuki M."/>
            <person name="Aoki J."/>
            <person name="Arakawa T."/>
            <person name="Iida J."/>
            <person name="Imamura K."/>
            <person name="Itoh M."/>
            <person name="Kato T."/>
            <person name="Kawaji H."/>
            <person name="Kawagashira N."/>
            <person name="Kawashima T."/>
            <person name="Kojima M."/>
            <person name="Kondo S."/>
            <person name="Konno H."/>
            <person name="Nakano K."/>
            <person name="Ninomiya N."/>
            <person name="Nishio T."/>
            <person name="Okada M."/>
            <person name="Plessy C."/>
            <person name="Shibata K."/>
            <person name="Shiraki T."/>
            <person name="Suzuki S."/>
            <person name="Tagami M."/>
            <person name="Waki K."/>
            <person name="Watahiki A."/>
            <person name="Okamura-Oho Y."/>
            <person name="Suzuki H."/>
            <person name="Kawai J."/>
            <person name="Hayashizaki Y."/>
        </authorList>
    </citation>
    <scope>NUCLEOTIDE SEQUENCE [LARGE SCALE MRNA] (ISOFORM 2)</scope>
    <source>
        <strain evidence="12">C57BL/6J</strain>
        <tissue evidence="12">Brain</tissue>
    </source>
</reference>
<reference evidence="9 10" key="3">
    <citation type="journal article" date="2004" name="Genome Res.">
        <title>The status, quality, and expansion of the NIH full-length cDNA project: the Mammalian Gene Collection (MGC).</title>
        <authorList>
            <consortium name="The MGC Project Team"/>
        </authorList>
    </citation>
    <scope>NUCLEOTIDE SEQUENCE [LARGE SCALE MRNA] OF 11-261 (ISOFORM 1)</scope>
    <source>
        <tissue evidence="10">Mammary tumor</tissue>
    </source>
</reference>
<dbReference type="EMBL" id="AY081953">
    <property type="protein sequence ID" value="AAL91076.2"/>
    <property type="molecule type" value="mRNA"/>
</dbReference>
<dbReference type="EMBL" id="AY352519">
    <property type="protein sequence ID" value="AAQ56179.1"/>
    <property type="molecule type" value="mRNA"/>
</dbReference>
<dbReference type="EMBL" id="AK090181">
    <property type="protein sequence ID" value="BAC41126.1"/>
    <property type="molecule type" value="mRNA"/>
</dbReference>
<dbReference type="EMBL" id="BC044789">
    <property type="protein sequence ID" value="AAH44789.1"/>
    <property type="status" value="ALT_INIT"/>
    <property type="molecule type" value="mRNA"/>
</dbReference>
<dbReference type="CCDS" id="CCDS19733.1">
    <molecule id="Q810I0-2"/>
</dbReference>
<dbReference type="CCDS" id="CCDS57388.1">
    <molecule id="Q810I0-1"/>
</dbReference>
<dbReference type="RefSeq" id="NP_001186606.1">
    <molecule id="Q810I0-1"/>
    <property type="nucleotide sequence ID" value="NM_001199677.2"/>
</dbReference>
<dbReference type="RefSeq" id="NP_808242.1">
    <molecule id="Q810I0-2"/>
    <property type="nucleotide sequence ID" value="NM_177574.5"/>
</dbReference>
<dbReference type="SMR" id="Q810I0"/>
<dbReference type="FunCoup" id="Q810I0">
    <property type="interactions" value="357"/>
</dbReference>
<dbReference type="STRING" id="10090.ENSMUSP00000063762"/>
<dbReference type="GlyGen" id="Q810I0">
    <property type="glycosylation" value="1 site"/>
</dbReference>
<dbReference type="iPTMnet" id="Q810I0"/>
<dbReference type="PhosphoSitePlus" id="Q810I0"/>
<dbReference type="ProteomicsDB" id="297886">
    <molecule id="Q810I0-1"/>
</dbReference>
<dbReference type="ProteomicsDB" id="297887">
    <molecule id="Q810I0-2"/>
</dbReference>
<dbReference type="Antibodypedia" id="48722">
    <property type="antibodies" value="22 antibodies from 11 providers"/>
</dbReference>
<dbReference type="Ensembl" id="ENSMUST00000067935.11">
    <molecule id="Q810I0-1"/>
    <property type="protein sequence ID" value="ENSMUSP00000063762.5"/>
    <property type="gene ID" value="ENSMUSG00000043614.14"/>
</dbReference>
<dbReference type="Ensembl" id="ENSMUST00000076203.3">
    <molecule id="Q810I0-2"/>
    <property type="protein sequence ID" value="ENSMUSP00000075559.3"/>
    <property type="gene ID" value="ENSMUSG00000043614.14"/>
</dbReference>
<dbReference type="GeneID" id="194309"/>
<dbReference type="KEGG" id="mmu:194309"/>
<dbReference type="UCSC" id="uc008zxq.2">
    <molecule id="Q810I0-2"/>
    <property type="organism name" value="mouse"/>
</dbReference>
<dbReference type="UCSC" id="uc008zxr.2">
    <molecule id="Q810I0-1"/>
    <property type="organism name" value="mouse"/>
</dbReference>
<dbReference type="AGR" id="MGI:2159402"/>
<dbReference type="CTD" id="155382"/>
<dbReference type="MGI" id="MGI:2159402">
    <property type="gene designation" value="Vps37d"/>
</dbReference>
<dbReference type="VEuPathDB" id="HostDB:ENSMUSG00000043614"/>
<dbReference type="eggNOG" id="KOG3270">
    <property type="taxonomic scope" value="Eukaryota"/>
</dbReference>
<dbReference type="GeneTree" id="ENSGT00950000183012"/>
<dbReference type="HOGENOM" id="CLU_081733_0_0_1"/>
<dbReference type="InParanoid" id="Q810I0"/>
<dbReference type="OMA" id="WQFQGLQ"/>
<dbReference type="OrthoDB" id="8921242at2759"/>
<dbReference type="PhylomeDB" id="Q810I0"/>
<dbReference type="Reactome" id="R-MMU-917729">
    <property type="pathway name" value="Endosomal Sorting Complex Required For Transport (ESCRT)"/>
</dbReference>
<dbReference type="BioGRID-ORCS" id="194309">
    <property type="hits" value="1 hit in 75 CRISPR screens"/>
</dbReference>
<dbReference type="PRO" id="PR:Q810I0"/>
<dbReference type="Proteomes" id="UP000000589">
    <property type="component" value="Chromosome 5"/>
</dbReference>
<dbReference type="RNAct" id="Q810I0">
    <property type="molecule type" value="protein"/>
</dbReference>
<dbReference type="Bgee" id="ENSMUSG00000043614">
    <property type="expression patterns" value="Expressed in ear vesicle and 166 other cell types or tissues"/>
</dbReference>
<dbReference type="GO" id="GO:0000813">
    <property type="term" value="C:ESCRT I complex"/>
    <property type="evidence" value="ECO:0000250"/>
    <property type="project" value="UniProtKB"/>
</dbReference>
<dbReference type="GO" id="GO:0031902">
    <property type="term" value="C:late endosome membrane"/>
    <property type="evidence" value="ECO:0007669"/>
    <property type="project" value="UniProtKB-SubCell"/>
</dbReference>
<dbReference type="GO" id="GO:0009056">
    <property type="term" value="P:catabolic process"/>
    <property type="evidence" value="ECO:0007669"/>
    <property type="project" value="UniProtKB-ARBA"/>
</dbReference>
<dbReference type="GO" id="GO:0015031">
    <property type="term" value="P:protein transport"/>
    <property type="evidence" value="ECO:0007669"/>
    <property type="project" value="UniProtKB-KW"/>
</dbReference>
<dbReference type="InterPro" id="IPR009851">
    <property type="entry name" value="Mod_r"/>
</dbReference>
<dbReference type="PANTHER" id="PTHR13678">
    <property type="entry name" value="VACUOLAR PROTEIN SORTING-ASSOCIATED PROTEIN 37"/>
    <property type="match status" value="1"/>
</dbReference>
<dbReference type="PANTHER" id="PTHR13678:SF12">
    <property type="entry name" value="VACUOLAR PROTEIN SORTING-ASSOCIATED PROTEIN 37D"/>
    <property type="match status" value="1"/>
</dbReference>
<dbReference type="Pfam" id="PF07200">
    <property type="entry name" value="Mod_r"/>
    <property type="match status" value="1"/>
</dbReference>
<dbReference type="PROSITE" id="PS51314">
    <property type="entry name" value="VPS37_C"/>
    <property type="match status" value="1"/>
</dbReference>
<feature type="chain" id="PRO_0000328928" description="Vacuolar protein sorting-associated protein 37D">
    <location>
        <begin position="1"/>
        <end position="261"/>
    </location>
</feature>
<feature type="domain" description="VPS37 C-terminal" evidence="3">
    <location>
        <begin position="93"/>
        <end position="182"/>
    </location>
</feature>
<feature type="region of interest" description="Disordered" evidence="4">
    <location>
        <begin position="172"/>
        <end position="261"/>
    </location>
</feature>
<feature type="compositionally biased region" description="Low complexity" evidence="4">
    <location>
        <begin position="181"/>
        <end position="195"/>
    </location>
</feature>
<feature type="compositionally biased region" description="Pro residues" evidence="4">
    <location>
        <begin position="215"/>
        <end position="224"/>
    </location>
</feature>
<feature type="compositionally biased region" description="Pro residues" evidence="4">
    <location>
        <begin position="231"/>
        <end position="261"/>
    </location>
</feature>
<feature type="splice variant" id="VSP_052739" description="In isoform 2." evidence="7 8">
    <location>
        <begin position="47"/>
        <end position="131"/>
    </location>
</feature>
<evidence type="ECO:0000250" key="1"/>
<evidence type="ECO:0000255" key="2"/>
<evidence type="ECO:0000255" key="3">
    <source>
        <dbReference type="PROSITE-ProRule" id="PRU00646"/>
    </source>
</evidence>
<evidence type="ECO:0000256" key="4">
    <source>
        <dbReference type="SAM" id="MobiDB-lite"/>
    </source>
</evidence>
<evidence type="ECO:0000269" key="5">
    <source>
    </source>
</evidence>
<evidence type="ECO:0000269" key="6">
    <source ref="1"/>
</evidence>
<evidence type="ECO:0000303" key="7">
    <source>
    </source>
</evidence>
<evidence type="ECO:0000303" key="8">
    <source ref="1"/>
</evidence>
<evidence type="ECO:0000305" key="9"/>
<evidence type="ECO:0000312" key="10">
    <source>
        <dbReference type="EMBL" id="AAH44789.1"/>
    </source>
</evidence>
<evidence type="ECO:0000312" key="11">
    <source>
        <dbReference type="EMBL" id="AAL91076.2"/>
    </source>
</evidence>
<evidence type="ECO:0000312" key="12">
    <source>
        <dbReference type="EMBL" id="BAC41126.1"/>
    </source>
</evidence>
<evidence type="ECO:0000312" key="13">
    <source>
        <dbReference type="MGI" id="MGI:2159402"/>
    </source>
</evidence>
<accession>Q810I0</accession>
<accession>Q80UX4</accession>
<accession>Q8C1V8</accession>
<protein>
    <recommendedName>
        <fullName>Vacuolar protein sorting-associated protein 37D</fullName>
    </recommendedName>
    <alternativeName>
        <fullName>ESCRT-I complex subunit VPS37D</fullName>
    </alternativeName>
    <alternativeName>
        <fullName>Williams-Beuren syndrome region protein 24 homolog</fullName>
    </alternativeName>
</protein>
<keyword id="KW-0025">Alternative splicing</keyword>
<keyword id="KW-0967">Endosome</keyword>
<keyword id="KW-0472">Membrane</keyword>
<keyword id="KW-0653">Protein transport</keyword>
<keyword id="KW-1185">Reference proteome</keyword>
<keyword id="KW-0813">Transport</keyword>
<sequence length="261" mass="28563">MYRARAARAGPEPGSPGRFGILSTGQLRDLLQDEPKLDRIVRLSRKFQGLQLERDACLASNYALAKENLALRPRLEMGRTALAIKYQELREVAENCADKLQRLEKSMHRWSPQCALGWLQAELEEAEQEAEVQMEQLLLGEQSLEAFLPAFQRGRALAHLRRTQAEKLQEVLRRRERSAQPAPTTAAAAAAAATAMDPPKPFPAAAVLPTGAARGPPPAVPRSLPPLDSRPVPPVKGSPGCPFGPAPLLSPRPSQPEPPHR</sequence>
<proteinExistence type="evidence at transcript level"/>
<gene>
    <name evidence="13" type="primary">Vps37d</name>
    <name evidence="11 13" type="synonym">Wbscr24</name>
</gene>
<organism>
    <name type="scientific">Mus musculus</name>
    <name type="common">Mouse</name>
    <dbReference type="NCBI Taxonomy" id="10090"/>
    <lineage>
        <taxon>Eukaryota</taxon>
        <taxon>Metazoa</taxon>
        <taxon>Chordata</taxon>
        <taxon>Craniata</taxon>
        <taxon>Vertebrata</taxon>
        <taxon>Euteleostomi</taxon>
        <taxon>Mammalia</taxon>
        <taxon>Eutheria</taxon>
        <taxon>Euarchontoglires</taxon>
        <taxon>Glires</taxon>
        <taxon>Rodentia</taxon>
        <taxon>Myomorpha</taxon>
        <taxon>Muroidea</taxon>
        <taxon>Muridae</taxon>
        <taxon>Murinae</taxon>
        <taxon>Mus</taxon>
        <taxon>Mus</taxon>
    </lineage>
</organism>